<reference key="1">
    <citation type="journal article" date="2008" name="J. Bacteriol.">
        <title>The complete genome sequence of Escherichia coli DH10B: insights into the biology of a laboratory workhorse.</title>
        <authorList>
            <person name="Durfee T."/>
            <person name="Nelson R."/>
            <person name="Baldwin S."/>
            <person name="Plunkett G. III"/>
            <person name="Burland V."/>
            <person name="Mau B."/>
            <person name="Petrosino J.F."/>
            <person name="Qin X."/>
            <person name="Muzny D.M."/>
            <person name="Ayele M."/>
            <person name="Gibbs R.A."/>
            <person name="Csorgo B."/>
            <person name="Posfai G."/>
            <person name="Weinstock G.M."/>
            <person name="Blattner F.R."/>
        </authorList>
    </citation>
    <scope>NUCLEOTIDE SEQUENCE [LARGE SCALE GENOMIC DNA]</scope>
    <source>
        <strain>K12 / DH10B</strain>
    </source>
</reference>
<proteinExistence type="inferred from homology"/>
<evidence type="ECO:0000255" key="1">
    <source>
        <dbReference type="HAMAP-Rule" id="MF_01652"/>
    </source>
</evidence>
<keyword id="KW-0058">Aromatic hydrocarbons catabolism</keyword>
<keyword id="KW-0274">FAD</keyword>
<keyword id="KW-0285">Flavoprotein</keyword>
<keyword id="KW-0520">NAD</keyword>
<keyword id="KW-0560">Oxidoreductase</keyword>
<protein>
    <recommendedName>
        <fullName evidence="1">3-(3-hydroxy-phenyl)propionate/3-hydroxycinnamic acid hydroxylase</fullName>
        <shortName evidence="1">3-HCI hydroxylase</shortName>
        <shortName evidence="1">3-HPP hydroxylase</shortName>
        <ecNumber evidence="1">1.14.13.127</ecNumber>
    </recommendedName>
</protein>
<gene>
    <name evidence="1" type="primary">mhpA</name>
    <name type="ordered locus">ECDH10B_1359</name>
</gene>
<accession>B1XBJ4</accession>
<dbReference type="EC" id="1.14.13.127" evidence="1"/>
<dbReference type="EMBL" id="CP000948">
    <property type="protein sequence ID" value="ACB02464.1"/>
    <property type="molecule type" value="Genomic_DNA"/>
</dbReference>
<dbReference type="RefSeq" id="WP_001007407.1">
    <property type="nucleotide sequence ID" value="NC_010473.1"/>
</dbReference>
<dbReference type="SMR" id="B1XBJ4"/>
<dbReference type="KEGG" id="ecd:ECDH10B_1359"/>
<dbReference type="HOGENOM" id="CLU_009665_20_2_6"/>
<dbReference type="UniPathway" id="UPA00714"/>
<dbReference type="GO" id="GO:0008688">
    <property type="term" value="F:3-(3-hydroxyphenyl)propionate hydroxylase activity"/>
    <property type="evidence" value="ECO:0007669"/>
    <property type="project" value="UniProtKB-UniRule"/>
</dbReference>
<dbReference type="GO" id="GO:0071949">
    <property type="term" value="F:FAD binding"/>
    <property type="evidence" value="ECO:0007669"/>
    <property type="project" value="InterPro"/>
</dbReference>
<dbReference type="GO" id="GO:0019622">
    <property type="term" value="P:3-(3-hydroxy)phenylpropionate catabolic process"/>
    <property type="evidence" value="ECO:0007669"/>
    <property type="project" value="UniProtKB-UniRule"/>
</dbReference>
<dbReference type="GO" id="GO:0019380">
    <property type="term" value="P:3-phenylpropionate catabolic process"/>
    <property type="evidence" value="ECO:0007669"/>
    <property type="project" value="UniProtKB-UniPathway"/>
</dbReference>
<dbReference type="FunFam" id="3.30.70.2450:FF:000001">
    <property type="entry name" value="3-(3-hydroxy-phenyl)propionate/3-hydroxycinnamic acid hydroxylase"/>
    <property type="match status" value="1"/>
</dbReference>
<dbReference type="FunFam" id="3.50.50.60:FF:000126">
    <property type="entry name" value="3-(3-hydroxy-phenyl)propionate/3-hydroxycinnamic acid hydroxylase"/>
    <property type="match status" value="1"/>
</dbReference>
<dbReference type="Gene3D" id="3.30.70.2450">
    <property type="match status" value="1"/>
</dbReference>
<dbReference type="Gene3D" id="3.50.50.60">
    <property type="entry name" value="FAD/NAD(P)-binding domain"/>
    <property type="match status" value="1"/>
</dbReference>
<dbReference type="HAMAP" id="MF_01652">
    <property type="entry name" value="MhpA"/>
    <property type="match status" value="1"/>
</dbReference>
<dbReference type="InterPro" id="IPR023786">
    <property type="entry name" value="3-HPP/3HCI_hydroxylase"/>
</dbReference>
<dbReference type="InterPro" id="IPR002938">
    <property type="entry name" value="FAD-bd"/>
</dbReference>
<dbReference type="InterPro" id="IPR036188">
    <property type="entry name" value="FAD/NAD-bd_sf"/>
</dbReference>
<dbReference type="InterPro" id="IPR050631">
    <property type="entry name" value="PheA/TfdB_FAD_monoxygenase"/>
</dbReference>
<dbReference type="NCBIfam" id="NF004827">
    <property type="entry name" value="PRK06183.1-1"/>
    <property type="match status" value="1"/>
</dbReference>
<dbReference type="NCBIfam" id="NF004829">
    <property type="entry name" value="PRK06183.1-3"/>
    <property type="match status" value="1"/>
</dbReference>
<dbReference type="NCBIfam" id="NF004831">
    <property type="entry name" value="PRK06183.1-5"/>
    <property type="match status" value="1"/>
</dbReference>
<dbReference type="PANTHER" id="PTHR43476">
    <property type="entry name" value="3-(3-HYDROXY-PHENYL)PROPIONATE/3-HYDROXYCINNAMIC ACID HYDROXYLASE"/>
    <property type="match status" value="1"/>
</dbReference>
<dbReference type="PANTHER" id="PTHR43476:SF3">
    <property type="entry name" value="FAD-BINDING MONOOXYGENASE"/>
    <property type="match status" value="1"/>
</dbReference>
<dbReference type="Pfam" id="PF01494">
    <property type="entry name" value="FAD_binding_3"/>
    <property type="match status" value="1"/>
</dbReference>
<dbReference type="PRINTS" id="PR00420">
    <property type="entry name" value="RNGMNOXGNASE"/>
</dbReference>
<dbReference type="SUPFAM" id="SSF51905">
    <property type="entry name" value="FAD/NAD(P)-binding domain"/>
    <property type="match status" value="1"/>
</dbReference>
<comment type="function">
    <text evidence="1">Catalyzes the insertion of one atom of molecular oxygen into position 2 of the phenyl ring of 3-(3-hydroxyphenyl)propionate (3-HPP) and hydroxycinnamic acid (3HCI).</text>
</comment>
<comment type="catalytic activity">
    <reaction evidence="1">
        <text>3-(3-hydroxyphenyl)propanoate + NADH + O2 + H(+) = 3-(2,3-dihydroxyphenyl)propanoate + NAD(+) + H2O</text>
        <dbReference type="Rhea" id="RHEA:24785"/>
        <dbReference type="ChEBI" id="CHEBI:15377"/>
        <dbReference type="ChEBI" id="CHEBI:15378"/>
        <dbReference type="ChEBI" id="CHEBI:15379"/>
        <dbReference type="ChEBI" id="CHEBI:46951"/>
        <dbReference type="ChEBI" id="CHEBI:57277"/>
        <dbReference type="ChEBI" id="CHEBI:57540"/>
        <dbReference type="ChEBI" id="CHEBI:57945"/>
        <dbReference type="EC" id="1.14.13.127"/>
    </reaction>
</comment>
<comment type="catalytic activity">
    <reaction evidence="1">
        <text>(2E)-3-(3-hydroxyphenyl)prop-2-enoate + NADH + O2 + H(+) = (2E)-3-(2,3-dihydroxyphenyl)prop-2-enoate + NAD(+) + H2O</text>
        <dbReference type="Rhea" id="RHEA:27846"/>
        <dbReference type="ChEBI" id="CHEBI:15377"/>
        <dbReference type="ChEBI" id="CHEBI:15378"/>
        <dbReference type="ChEBI" id="CHEBI:15379"/>
        <dbReference type="ChEBI" id="CHEBI:47928"/>
        <dbReference type="ChEBI" id="CHEBI:57540"/>
        <dbReference type="ChEBI" id="CHEBI:57945"/>
        <dbReference type="ChEBI" id="CHEBI:58642"/>
        <dbReference type="EC" id="1.14.13.127"/>
    </reaction>
</comment>
<comment type="cofactor">
    <cofactor evidence="1">
        <name>FAD</name>
        <dbReference type="ChEBI" id="CHEBI:57692"/>
    </cofactor>
</comment>
<comment type="pathway">
    <text evidence="1">Aromatic compound metabolism; 3-phenylpropanoate degradation.</text>
</comment>
<comment type="similarity">
    <text evidence="1">Belongs to the PheA/TfdB FAD monooxygenase family.</text>
</comment>
<name>MHPA_ECODH</name>
<sequence>MAIQHPDIQPAVNHSVQVAIAGAGPVGLMMANYLGQMGIDVLVVEKLDKLIDYPRAIGIDDEALRTMQSVGLVDDVLPHTTPWHAMRFLTPKGRCFADIQPMTDEFGWPRRNAFIQPQVDAVMLEGVSRFPNVRCLFSRELEAFSQQDDEVTLHLKTAEGQREIVKAQWLVACDGGASFVRRTLNVPFEGKTAPNQWIVVDIANDPLSTPHIYLCCDPVRPYVSAALPHAVRRFEFMVMPGETEEQLREPQNMRKLLSKVLPNPDNVELIRQRVYTHNARLAQRFRIDRVLLAGDAAHIMPVWQGQGYNSGMRDAFNLAWKLALVIQGKARDALLDTYQQERRDHAKAMIDLSVTAGNVLAPPKRWQGTLRDGVSWLLNYLPPVKRYFLEMRFKPMPQYYGGALMREGEAKHSPVGKMFIQPKVTLENGDVTLLDNAIGANFAVIGWGCNPLWGMSDEQIQQWRALGTRFIQVVPEVQIHTAQDNHDGVLRVGDTQGRLRSWFAQHNASLVVMRPDRFVAATAIPQTLGKTLNKLASVMTLTRPDADVSVEKVA</sequence>
<feature type="chain" id="PRO_1000186994" description="3-(3-hydroxy-phenyl)propionate/3-hydroxycinnamic acid hydroxylase">
    <location>
        <begin position="1"/>
        <end position="554"/>
    </location>
</feature>
<feature type="binding site" evidence="1">
    <location>
        <begin position="17"/>
        <end position="46"/>
    </location>
    <ligand>
        <name>FAD</name>
        <dbReference type="ChEBI" id="CHEBI:57692"/>
    </ligand>
</feature>
<feature type="binding site" evidence="1">
    <location>
        <begin position="285"/>
        <end position="295"/>
    </location>
    <ligand>
        <name>FAD</name>
        <dbReference type="ChEBI" id="CHEBI:57692"/>
    </ligand>
</feature>
<organism>
    <name type="scientific">Escherichia coli (strain K12 / DH10B)</name>
    <dbReference type="NCBI Taxonomy" id="316385"/>
    <lineage>
        <taxon>Bacteria</taxon>
        <taxon>Pseudomonadati</taxon>
        <taxon>Pseudomonadota</taxon>
        <taxon>Gammaproteobacteria</taxon>
        <taxon>Enterobacterales</taxon>
        <taxon>Enterobacteriaceae</taxon>
        <taxon>Escherichia</taxon>
    </lineage>
</organism>